<name>KI11A_XENLA</name>
<sequence length="1067" mass="119885">MSSQNSFMSSKKDDKGKNIQVVVRCRPFNQLERKASSHSVLECESQRKEVCVRTGEVNDKLGKKTYTFDMVFGPAAKQIDVYRSVVCPILDEVIMGYNCTIFAYGQTGTGKTFTMEGERSSDEEFTWEQDPLAGIIPRTLHQIFEKLSEIGTEFSVKVSLLEIYNEELFDLLSPSPDVGERLQMFDDPRNKRGVIIKGLEEISVHNKDEVYQILERGAAKRKTASTLMNAYSSRSHSVFSVTIHMKETTIDGEELVKIGKLNLVDLAGSENIGRSGAVDKRAREAGNINQSLLTLGRVITALVERAPHIPYRESKLTRILQDSLGGRTKTSIIATVSPASINLEETMSTLDYASRAKNIMNKPEVNQKLTKKALIKEYTEEIERLKRELATAREKNGVYLSNENYEQLQGKVLSQEEMITEYSEKIAAMEEEIKRIGELFADNKKELEECTTILQCKEKELEATQNNLQESKEQLAQEAFVVSAMETTEKKLHGTANKLLSTVRETTRDVSGLHEKLDRKRAVEQHNSQVHENFAEQINRRFSVIQQTVDEYSVKQQGMLDFYTNSIDDLLGASSSALSATATAVAKSFASVQETVSKQVSHSVEEILKQETLSSQAKDDLQKLMTAHRTGLEQALRTDLLPVVTAVLDLNSHLSHCLQSFLGVADKIDSHKEDMNSFFTEHSRSLHKLRLDSSSALSSIQSEYESLKEEIATAQSTHSEGVNNLISSLQNQLNLLAMETRQQFSGFLSKGGKLQESVGCLQQDLDLVSSDAIECISSHHSKFTEQSQAVTVEIRQLAGSNMSTLEESSKQCEKLTNSINTICQESQQWCESAGQKMDSLLEEQVCYLHSSKKQIQTLHKDVEDGCGSSVVEITDRVNVQCQAQEKALTSLVEQVKDDKEMLGEQRLELNEQVQSGLNKVHVYLKEELRNDVPTGTTPQRRDYVYPSLLIKTKPRDVLLEQFRQQQQEYLESICSVISEAVEPPVEQDSLEDEPPVAVNDSVISEKSCIDLSMTCQEKGGVPFFQQKKALRKEKENRGNATLLERSKIMDEVEQSLPKSKLPLRMQN</sequence>
<keyword id="KW-0067">ATP-binding</keyword>
<keyword id="KW-0131">Cell cycle</keyword>
<keyword id="KW-0132">Cell division</keyword>
<keyword id="KW-0175">Coiled coil</keyword>
<keyword id="KW-0963">Cytoplasm</keyword>
<keyword id="KW-0206">Cytoskeleton</keyword>
<keyword id="KW-0493">Microtubule</keyword>
<keyword id="KW-0498">Mitosis</keyword>
<keyword id="KW-0505">Motor protein</keyword>
<keyword id="KW-0547">Nucleotide-binding</keyword>
<keyword id="KW-0597">Phosphoprotein</keyword>
<keyword id="KW-1185">Reference proteome</keyword>
<proteinExistence type="evidence at protein level"/>
<comment type="function">
    <text evidence="2 5">Plus end-directed motor protein required for establishing a bipolar spindle (PubMed:15583027). Associates with both interphase and spindle microtubules (PubMed:15583027). May be involved in nuclear divisions taking place during the development of unfertilized eggs (PubMed:15583027). Required in non-mitotic cells for transport of secretory proteins from the Golgi complex to the cell surface (By similarity).</text>
</comment>
<comment type="subunit">
    <text evidence="1">Heterotetramer of two heavy and two light chains. Interacts with aurka (By similarity).</text>
</comment>
<comment type="subcellular location">
    <subcellularLocation>
        <location>Cytoplasm</location>
    </subcellularLocation>
    <subcellularLocation>
        <location>Cytoplasm</location>
        <location>Cytoskeleton</location>
        <location>Spindle pole</location>
    </subcellularLocation>
    <text>Concentrated around the polar ends of both meiotic and mitotic spindles.</text>
</comment>
<comment type="tissue specificity">
    <text>Highly expressed in unfertilized eggs, especially in the germinal vesicle and in the radial yolk-poor channels. Also present in testis.</text>
</comment>
<comment type="developmental stage">
    <text evidence="8">Expressed maternally. Accumulates during the latter stages of oogenesis and levels increase three-fold during oocyte maturation. Levels decrease after fertilization.</text>
</comment>
<comment type="PTM">
    <text evidence="6 7">Phosphorylation of Thr-937 during mitosis controls the association of this protein with the spindle apparatus.</text>
</comment>
<comment type="PTM">
    <text>A subset of this protein primarily localized at the spindle pole is phosphorylated by NEK6 during mitosis.</text>
</comment>
<comment type="PTM">
    <text evidence="1">Phosphorylated on a serine residue by aurka.</text>
</comment>
<comment type="similarity">
    <text evidence="4">Belongs to the TRAFAC class myosin-kinesin ATPase superfamily. Kinesin family. BimC subfamily.</text>
</comment>
<gene>
    <name type="primary">kif11-a</name>
    <name type="synonym">eg5</name>
</gene>
<evidence type="ECO:0000250" key="1"/>
<evidence type="ECO:0000250" key="2">
    <source>
        <dbReference type="UniProtKB" id="P52732"/>
    </source>
</evidence>
<evidence type="ECO:0000255" key="3"/>
<evidence type="ECO:0000255" key="4">
    <source>
        <dbReference type="PROSITE-ProRule" id="PRU00283"/>
    </source>
</evidence>
<evidence type="ECO:0000269" key="5">
    <source>
    </source>
</evidence>
<evidence type="ECO:0000269" key="6">
    <source>
    </source>
</evidence>
<evidence type="ECO:0000269" key="7">
    <source>
    </source>
</evidence>
<evidence type="ECO:0000269" key="8">
    <source>
    </source>
</evidence>
<reference key="1">
    <citation type="journal article" date="1994" name="Dev. Biol.">
        <title>The kinesin-related protein Eg5 associates with both interphase and spindle microtubules during Xenopus early development.</title>
        <authorList>
            <person name="Houliston E."/>
            <person name="le Guellec R."/>
            <person name="Kress M."/>
            <person name="Philippe M."/>
            <person name="le Guellec K."/>
        </authorList>
    </citation>
    <scope>NUCLEOTIDE SEQUENCE [MRNA]</scope>
    <scope>SUBCELLULAR LOCATION</scope>
    <scope>DEVELOPMENTAL STAGE</scope>
    <source>
        <tissue>Egg</tissue>
    </source>
</reference>
<reference key="2">
    <citation type="journal article" date="2004" name="J. Cell Biol.">
        <title>The kinesin Eg5 drives poleward microtubule flux in Xenopus laevis egg extract spindles.</title>
        <authorList>
            <person name="Miyamoto D.T."/>
            <person name="Perlman Z.E."/>
            <person name="Burbank K.S."/>
            <person name="Groen A.C."/>
            <person name="Mitchison T.J."/>
        </authorList>
    </citation>
    <scope>FUNCTION</scope>
</reference>
<reference key="3">
    <citation type="journal article" date="2008" name="J. Cell Sci.">
        <title>The NIMA-family kinase Nek6 phosphorylates the kinesin Eg5 at a novel site necessary for mitotic spindle formation.</title>
        <authorList>
            <person name="Rapley J."/>
            <person name="Nicolas M."/>
            <person name="Groen A."/>
            <person name="Regue L."/>
            <person name="Bertran M.T."/>
            <person name="Caelles C."/>
            <person name="Avruch J."/>
            <person name="Roig J."/>
        </authorList>
    </citation>
    <scope>SUBCELLULAR LOCATION</scope>
    <scope>PHOSPHORYLATION AT SER-1046</scope>
</reference>
<reference key="4">
    <citation type="journal article" date="2008" name="PLoS ONE">
        <title>Phosphorylation by Cdk1 increases the binding of Eg5 to microtubules in vitro and in Xenopus egg extract spindles.</title>
        <authorList>
            <person name="Cahu J."/>
            <person name="Olichon A."/>
            <person name="Hentrich C."/>
            <person name="Schek H."/>
            <person name="Drinjakovic J."/>
            <person name="Zhang C."/>
            <person name="Doherty-Kirby A."/>
            <person name="Lajoie G."/>
            <person name="Surrey T."/>
        </authorList>
    </citation>
    <scope>PHOSPHORYLATION AT THR-937</scope>
    <scope>MUTAGENESIS OF THR-937</scope>
</reference>
<dbReference type="EMBL" id="X71864">
    <property type="protein sequence ID" value="CAA50695.1"/>
    <property type="molecule type" value="mRNA"/>
</dbReference>
<dbReference type="PIR" id="I51616">
    <property type="entry name" value="S33417"/>
</dbReference>
<dbReference type="SMR" id="Q91783"/>
<dbReference type="iPTMnet" id="Q91783"/>
<dbReference type="AGR" id="Xenbase:XB-GENE-979004"/>
<dbReference type="Xenbase" id="XB-GENE-979004">
    <property type="gene designation" value="kif11.L"/>
</dbReference>
<dbReference type="Proteomes" id="UP000186698">
    <property type="component" value="Unplaced"/>
</dbReference>
<dbReference type="GO" id="GO:0005737">
    <property type="term" value="C:cytoplasm"/>
    <property type="evidence" value="ECO:0000314"/>
    <property type="project" value="UniProtKB"/>
</dbReference>
<dbReference type="GO" id="GO:0072686">
    <property type="term" value="C:mitotic spindle"/>
    <property type="evidence" value="ECO:0000318"/>
    <property type="project" value="GO_Central"/>
</dbReference>
<dbReference type="GO" id="GO:0005634">
    <property type="term" value="C:nucleus"/>
    <property type="evidence" value="ECO:0000318"/>
    <property type="project" value="GO_Central"/>
</dbReference>
<dbReference type="GO" id="GO:0005876">
    <property type="term" value="C:spindle microtubule"/>
    <property type="evidence" value="ECO:0000314"/>
    <property type="project" value="UniProtKB"/>
</dbReference>
<dbReference type="GO" id="GO:0000922">
    <property type="term" value="C:spindle pole"/>
    <property type="evidence" value="ECO:0000314"/>
    <property type="project" value="UniProtKB"/>
</dbReference>
<dbReference type="GO" id="GO:0005524">
    <property type="term" value="F:ATP binding"/>
    <property type="evidence" value="ECO:0007669"/>
    <property type="project" value="UniProtKB-KW"/>
</dbReference>
<dbReference type="GO" id="GO:0008017">
    <property type="term" value="F:microtubule binding"/>
    <property type="evidence" value="ECO:0000314"/>
    <property type="project" value="UniProtKB"/>
</dbReference>
<dbReference type="GO" id="GO:0003777">
    <property type="term" value="F:microtubule motor activity"/>
    <property type="evidence" value="ECO:0000315"/>
    <property type="project" value="UniProtKB"/>
</dbReference>
<dbReference type="GO" id="GO:0008574">
    <property type="term" value="F:plus-end-directed microtubule motor activity"/>
    <property type="evidence" value="ECO:0000318"/>
    <property type="project" value="GO_Central"/>
</dbReference>
<dbReference type="GO" id="GO:0051301">
    <property type="term" value="P:cell division"/>
    <property type="evidence" value="ECO:0007669"/>
    <property type="project" value="UniProtKB-KW"/>
</dbReference>
<dbReference type="GO" id="GO:0007018">
    <property type="term" value="P:microtubule-based movement"/>
    <property type="evidence" value="ECO:0007669"/>
    <property type="project" value="InterPro"/>
</dbReference>
<dbReference type="GO" id="GO:0090307">
    <property type="term" value="P:mitotic spindle assembly"/>
    <property type="evidence" value="ECO:0000318"/>
    <property type="project" value="GO_Central"/>
</dbReference>
<dbReference type="GO" id="GO:0051231">
    <property type="term" value="P:spindle elongation"/>
    <property type="evidence" value="ECO:0000318"/>
    <property type="project" value="GO_Central"/>
</dbReference>
<dbReference type="CDD" id="cd01364">
    <property type="entry name" value="KISc_BimC_Eg5"/>
    <property type="match status" value="1"/>
</dbReference>
<dbReference type="FunFam" id="3.40.850.10:FF:000035">
    <property type="entry name" value="Kinesin-like protein KIF11"/>
    <property type="match status" value="1"/>
</dbReference>
<dbReference type="Gene3D" id="3.40.850.10">
    <property type="entry name" value="Kinesin motor domain"/>
    <property type="match status" value="1"/>
</dbReference>
<dbReference type="InterPro" id="IPR047149">
    <property type="entry name" value="KIF11-like"/>
</dbReference>
<dbReference type="InterPro" id="IPR047241">
    <property type="entry name" value="KIF11-like_kin_motor_dom"/>
</dbReference>
<dbReference type="InterPro" id="IPR025901">
    <property type="entry name" value="Kinesin-assoc_MT-bd_dom"/>
</dbReference>
<dbReference type="InterPro" id="IPR019821">
    <property type="entry name" value="Kinesin_motor_CS"/>
</dbReference>
<dbReference type="InterPro" id="IPR001752">
    <property type="entry name" value="Kinesin_motor_dom"/>
</dbReference>
<dbReference type="InterPro" id="IPR036961">
    <property type="entry name" value="Kinesin_motor_dom_sf"/>
</dbReference>
<dbReference type="InterPro" id="IPR027417">
    <property type="entry name" value="P-loop_NTPase"/>
</dbReference>
<dbReference type="PANTHER" id="PTHR47970">
    <property type="entry name" value="KINESIN-LIKE PROTEIN KIF11"/>
    <property type="match status" value="1"/>
</dbReference>
<dbReference type="PANTHER" id="PTHR47970:SF26">
    <property type="entry name" value="KINESIN-LIKE PROTEIN KIF11"/>
    <property type="match status" value="1"/>
</dbReference>
<dbReference type="Pfam" id="PF00225">
    <property type="entry name" value="Kinesin"/>
    <property type="match status" value="1"/>
</dbReference>
<dbReference type="Pfam" id="PF13931">
    <property type="entry name" value="Microtub_bind"/>
    <property type="match status" value="1"/>
</dbReference>
<dbReference type="PRINTS" id="PR00380">
    <property type="entry name" value="KINESINHEAVY"/>
</dbReference>
<dbReference type="SMART" id="SM00129">
    <property type="entry name" value="KISc"/>
    <property type="match status" value="1"/>
</dbReference>
<dbReference type="SUPFAM" id="SSF52540">
    <property type="entry name" value="P-loop containing nucleoside triphosphate hydrolases"/>
    <property type="match status" value="1"/>
</dbReference>
<dbReference type="PROSITE" id="PS00411">
    <property type="entry name" value="KINESIN_MOTOR_1"/>
    <property type="match status" value="1"/>
</dbReference>
<dbReference type="PROSITE" id="PS50067">
    <property type="entry name" value="KINESIN_MOTOR_2"/>
    <property type="match status" value="1"/>
</dbReference>
<feature type="chain" id="PRO_0000125374" description="Kinesin-like protein KIF11-A">
    <location>
        <begin position="1"/>
        <end position="1067"/>
    </location>
</feature>
<feature type="domain" description="Kinesin motor" evidence="4">
    <location>
        <begin position="18"/>
        <end position="359"/>
    </location>
</feature>
<feature type="coiled-coil region" evidence="3">
    <location>
        <begin position="365"/>
        <end position="480"/>
    </location>
</feature>
<feature type="coiled-coil region" evidence="3">
    <location>
        <begin position="692"/>
        <end position="721"/>
    </location>
</feature>
<feature type="coiled-coil region" evidence="3">
    <location>
        <begin position="882"/>
        <end position="915"/>
    </location>
</feature>
<feature type="binding site" evidence="4">
    <location>
        <begin position="105"/>
        <end position="112"/>
    </location>
    <ligand>
        <name>ATP</name>
        <dbReference type="ChEBI" id="CHEBI:30616"/>
    </ligand>
</feature>
<feature type="modified residue" description="Phosphothreonine; by CDK1" evidence="7">
    <location>
        <position position="937"/>
    </location>
</feature>
<feature type="modified residue" description="Phosphoserine; by NEK6" evidence="6">
    <location>
        <position position="1046"/>
    </location>
</feature>
<feature type="mutagenesis site" description="Disrupts spindle binding." evidence="7">
    <original>T</original>
    <variation>A</variation>
    <location>
        <position position="937"/>
    </location>
</feature>
<organism>
    <name type="scientific">Xenopus laevis</name>
    <name type="common">African clawed frog</name>
    <dbReference type="NCBI Taxonomy" id="8355"/>
    <lineage>
        <taxon>Eukaryota</taxon>
        <taxon>Metazoa</taxon>
        <taxon>Chordata</taxon>
        <taxon>Craniata</taxon>
        <taxon>Vertebrata</taxon>
        <taxon>Euteleostomi</taxon>
        <taxon>Amphibia</taxon>
        <taxon>Batrachia</taxon>
        <taxon>Anura</taxon>
        <taxon>Pipoidea</taxon>
        <taxon>Pipidae</taxon>
        <taxon>Xenopodinae</taxon>
        <taxon>Xenopus</taxon>
        <taxon>Xenopus</taxon>
    </lineage>
</organism>
<accession>Q91783</accession>
<protein>
    <recommendedName>
        <fullName>Kinesin-like protein KIF11-A</fullName>
    </recommendedName>
    <alternativeName>
        <fullName>Kinesin-5</fullName>
    </alternativeName>
    <alternativeName>
        <fullName>Kinesin-related motor protein Eg5-2</fullName>
        <shortName>XLEg5K2</shortName>
    </alternativeName>
</protein>